<gene>
    <name type="primary">CHS1A</name>
</gene>
<dbReference type="EC" id="2.3.1.74"/>
<dbReference type="EMBL" id="U47739">
    <property type="protein sequence ID" value="AAB67734.1"/>
    <property type="molecule type" value="mRNA"/>
</dbReference>
<dbReference type="RefSeq" id="NP_001275352.1">
    <property type="nucleotide sequence ID" value="NM_001288423.1"/>
</dbReference>
<dbReference type="SMR" id="Q41436"/>
<dbReference type="FunCoup" id="Q41436">
    <property type="interactions" value="41"/>
</dbReference>
<dbReference type="STRING" id="4113.Q41436"/>
<dbReference type="GeneID" id="102577871"/>
<dbReference type="KEGG" id="sot:102577871"/>
<dbReference type="InParanoid" id="Q41436"/>
<dbReference type="OrthoDB" id="1500228at2759"/>
<dbReference type="UniPathway" id="UPA00154"/>
<dbReference type="Proteomes" id="UP000011115">
    <property type="component" value="Unassembled WGS sequence"/>
</dbReference>
<dbReference type="ExpressionAtlas" id="Q41436">
    <property type="expression patterns" value="baseline"/>
</dbReference>
<dbReference type="GO" id="GO:0016747">
    <property type="term" value="F:acyltransferase activity, transferring groups other than amino-acyl groups"/>
    <property type="evidence" value="ECO:0000318"/>
    <property type="project" value="GO_Central"/>
</dbReference>
<dbReference type="GO" id="GO:0016210">
    <property type="term" value="F:naringenin-chalcone synthase activity"/>
    <property type="evidence" value="ECO:0007669"/>
    <property type="project" value="UniProtKB-EC"/>
</dbReference>
<dbReference type="GO" id="GO:0009813">
    <property type="term" value="P:flavonoid biosynthetic process"/>
    <property type="evidence" value="ECO:0007669"/>
    <property type="project" value="UniProtKB-UniPathway"/>
</dbReference>
<dbReference type="GO" id="GO:0030639">
    <property type="term" value="P:polyketide biosynthetic process"/>
    <property type="evidence" value="ECO:0000318"/>
    <property type="project" value="GO_Central"/>
</dbReference>
<dbReference type="CDD" id="cd00831">
    <property type="entry name" value="CHS_like"/>
    <property type="match status" value="1"/>
</dbReference>
<dbReference type="FunFam" id="3.40.47.10:FF:000014">
    <property type="entry name" value="Chalcone synthase 1"/>
    <property type="match status" value="1"/>
</dbReference>
<dbReference type="FunFam" id="3.40.47.10:FF:000025">
    <property type="entry name" value="Chalcone synthase 2"/>
    <property type="match status" value="1"/>
</dbReference>
<dbReference type="Gene3D" id="3.40.47.10">
    <property type="match status" value="2"/>
</dbReference>
<dbReference type="InterPro" id="IPR012328">
    <property type="entry name" value="Chalcone/stilbene_synt_C"/>
</dbReference>
<dbReference type="InterPro" id="IPR001099">
    <property type="entry name" value="Chalcone/stilbene_synt_N"/>
</dbReference>
<dbReference type="InterPro" id="IPR018088">
    <property type="entry name" value="Chalcone/stilbene_synthase_AS"/>
</dbReference>
<dbReference type="InterPro" id="IPR011141">
    <property type="entry name" value="Polyketide_synthase_type-III"/>
</dbReference>
<dbReference type="InterPro" id="IPR016039">
    <property type="entry name" value="Thiolase-like"/>
</dbReference>
<dbReference type="PANTHER" id="PTHR11877:SF80">
    <property type="entry name" value="CHALCONE SYNTHASE 1"/>
    <property type="match status" value="1"/>
</dbReference>
<dbReference type="PANTHER" id="PTHR11877">
    <property type="entry name" value="HYDROXYMETHYLGLUTARYL-COA SYNTHASE"/>
    <property type="match status" value="1"/>
</dbReference>
<dbReference type="Pfam" id="PF02797">
    <property type="entry name" value="Chal_sti_synt_C"/>
    <property type="match status" value="1"/>
</dbReference>
<dbReference type="Pfam" id="PF00195">
    <property type="entry name" value="Chal_sti_synt_N"/>
    <property type="match status" value="1"/>
</dbReference>
<dbReference type="PIRSF" id="PIRSF000451">
    <property type="entry name" value="PKS_III"/>
    <property type="match status" value="1"/>
</dbReference>
<dbReference type="SUPFAM" id="SSF53901">
    <property type="entry name" value="Thiolase-like"/>
    <property type="match status" value="2"/>
</dbReference>
<dbReference type="PROSITE" id="PS00441">
    <property type="entry name" value="CHALCONE_SYNTH"/>
    <property type="match status" value="1"/>
</dbReference>
<reference key="1">
    <citation type="online journal article" date="1996" name="Plant Gene Register">
        <title>Characterization of two members of the chalcone synthase gene family from Solanum tuberosum L.</title>
        <authorList>
            <person name="Jeon J.-H."/>
            <person name="Kim H.-S."/>
            <person name="Choi K.-H."/>
            <person name="Joung Y.-H."/>
            <person name="Joung H."/>
            <person name="Byun S.-M."/>
        </authorList>
        <locator>PGR96-027</locator>
    </citation>
    <scope>NUCLEOTIDE SEQUENCE [MRNA]</scope>
    <source>
        <strain>cv. Red Pontiac</strain>
    </source>
</reference>
<comment type="function">
    <text>The primary product of this enzyme is 4,2',4',6'-tetrahydroxychalcone (also termed naringenin-chalcone or chalcone) which can under specific conditions spontaneously isomerize into naringenin.</text>
</comment>
<comment type="catalytic activity">
    <reaction evidence="1">
        <text>(E)-4-coumaroyl-CoA + 3 malonyl-CoA + 3 H(+) = 2',4,4',6'-tetrahydroxychalcone + 3 CO2 + 4 CoA</text>
        <dbReference type="Rhea" id="RHEA:11128"/>
        <dbReference type="ChEBI" id="CHEBI:15378"/>
        <dbReference type="ChEBI" id="CHEBI:15413"/>
        <dbReference type="ChEBI" id="CHEBI:16526"/>
        <dbReference type="ChEBI" id="CHEBI:57287"/>
        <dbReference type="ChEBI" id="CHEBI:57384"/>
        <dbReference type="ChEBI" id="CHEBI:85008"/>
        <dbReference type="EC" id="2.3.1.74"/>
    </reaction>
</comment>
<comment type="pathway">
    <text>Secondary metabolite biosynthesis; flavonoid biosynthesis.</text>
</comment>
<comment type="similarity">
    <text evidence="2">Belongs to the thiolase-like superfamily. Chalcone/stilbene synthases family.</text>
</comment>
<protein>
    <recommendedName>
        <fullName>Chalcone synthase 1A</fullName>
        <ecNumber>2.3.1.74</ecNumber>
    </recommendedName>
    <alternativeName>
        <fullName>Naringenin-chalcone synthase 1A</fullName>
    </alternativeName>
</protein>
<evidence type="ECO:0000255" key="1">
    <source>
        <dbReference type="PROSITE-ProRule" id="PRU10023"/>
    </source>
</evidence>
<evidence type="ECO:0000305" key="2"/>
<organism>
    <name type="scientific">Solanum tuberosum</name>
    <name type="common">Potato</name>
    <dbReference type="NCBI Taxonomy" id="4113"/>
    <lineage>
        <taxon>Eukaryota</taxon>
        <taxon>Viridiplantae</taxon>
        <taxon>Streptophyta</taxon>
        <taxon>Embryophyta</taxon>
        <taxon>Tracheophyta</taxon>
        <taxon>Spermatophyta</taxon>
        <taxon>Magnoliopsida</taxon>
        <taxon>eudicotyledons</taxon>
        <taxon>Gunneridae</taxon>
        <taxon>Pentapetalae</taxon>
        <taxon>asterids</taxon>
        <taxon>lamiids</taxon>
        <taxon>Solanales</taxon>
        <taxon>Solanaceae</taxon>
        <taxon>Solanoideae</taxon>
        <taxon>Solaneae</taxon>
        <taxon>Solanum</taxon>
    </lineage>
</organism>
<name>CHSA_SOLTU</name>
<accession>Q41436</accession>
<sequence>MVTVEEYRKAQRAEGPATILAIGTSTPSNCVDQSTYPDYYFRITNSEHKTELKEKFKRMCDKSMIKKRYMHLTEEILKENPNMCAYMAPSLDARQDIVVVEVPKLGKEAAQKAIKEWGQPKSKITHLVFCTTSGVDMPGCDYQLAKLLGLRPSVKRLMMYQQGCFVGGTVLRLAKDLAENNKGARVLVVCSEITAVTFRGPSESHLDSLVGQALFGDGAAAIIMGSDPIIGVERPLFELVSAAQTLVPDSEGAIDGHLREVGLTFHLLKDVPGLISKNIEKSLLEAFQPLGISDWNSLFWIAHPGGPAILDQVELKLGLKQEKLRATREVLSNYGNMSSACVLFILDEMRKASTNEGLGTTGEGLEWGVLFGFGPGLTVETVVLHSVAT</sequence>
<keyword id="KW-0012">Acyltransferase</keyword>
<keyword id="KW-0284">Flavonoid biosynthesis</keyword>
<keyword id="KW-1185">Reference proteome</keyword>
<keyword id="KW-0808">Transferase</keyword>
<feature type="chain" id="PRO_0000216052" description="Chalcone synthase 1A">
    <location>
        <begin position="1"/>
        <end position="389"/>
    </location>
</feature>
<feature type="active site" evidence="1">
    <location>
        <position position="164"/>
    </location>
</feature>
<proteinExistence type="evidence at transcript level"/>